<evidence type="ECO:0000255" key="1"/>
<evidence type="ECO:0000269" key="2">
    <source>
    </source>
</evidence>
<evidence type="ECO:0000305" key="3"/>
<evidence type="ECO:0007829" key="4">
    <source>
        <dbReference type="PDB" id="2F00"/>
    </source>
</evidence>
<proteinExistence type="evidence at protein level"/>
<feature type="chain" id="PRO_0000182089" description="UDP-N-acetylmuramate--L-alanine ligase">
    <location>
        <begin position="1"/>
        <end position="491"/>
    </location>
</feature>
<feature type="binding site" evidence="1">
    <location>
        <begin position="126"/>
        <end position="132"/>
    </location>
    <ligand>
        <name>ATP</name>
        <dbReference type="ChEBI" id="CHEBI:30616"/>
    </ligand>
</feature>
<feature type="mutagenesis site" description="In murC3.">
    <original>G</original>
    <variation>D</variation>
    <location>
        <position position="344"/>
    </location>
</feature>
<feature type="helix" evidence="4">
    <location>
        <begin position="3"/>
        <end position="9"/>
    </location>
</feature>
<feature type="turn" evidence="4">
    <location>
        <begin position="10"/>
        <end position="12"/>
    </location>
</feature>
<feature type="strand" evidence="4">
    <location>
        <begin position="21"/>
        <end position="26"/>
    </location>
</feature>
<feature type="helix" evidence="4">
    <location>
        <begin position="32"/>
        <end position="41"/>
    </location>
</feature>
<feature type="strand" evidence="4">
    <location>
        <begin position="45"/>
        <end position="49"/>
    </location>
</feature>
<feature type="helix" evidence="4">
    <location>
        <begin position="55"/>
        <end position="62"/>
    </location>
</feature>
<feature type="strand" evidence="4">
    <location>
        <begin position="66"/>
        <end position="70"/>
    </location>
</feature>
<feature type="helix" evidence="4">
    <location>
        <begin position="73"/>
        <end position="76"/>
    </location>
</feature>
<feature type="strand" evidence="4">
    <location>
        <begin position="80"/>
        <end position="84"/>
    </location>
</feature>
<feature type="helix" evidence="4">
    <location>
        <begin position="93"/>
        <end position="100"/>
    </location>
</feature>
<feature type="strand" evidence="4">
    <location>
        <begin position="105"/>
        <end position="107"/>
    </location>
</feature>
<feature type="helix" evidence="4">
    <location>
        <begin position="108"/>
        <end position="116"/>
    </location>
</feature>
<feature type="strand" evidence="4">
    <location>
        <begin position="119"/>
        <end position="128"/>
    </location>
</feature>
<feature type="helix" evidence="4">
    <location>
        <begin position="130"/>
        <end position="143"/>
    </location>
</feature>
<feature type="strand" evidence="4">
    <location>
        <begin position="149"/>
        <end position="151"/>
    </location>
</feature>
<feature type="turn" evidence="4">
    <location>
        <begin position="157"/>
        <end position="159"/>
    </location>
</feature>
<feature type="strand" evidence="4">
    <location>
        <begin position="160"/>
        <end position="164"/>
    </location>
</feature>
<feature type="strand" evidence="4">
    <location>
        <begin position="167"/>
        <end position="174"/>
    </location>
</feature>
<feature type="helix" evidence="4">
    <location>
        <begin position="181"/>
        <end position="184"/>
    </location>
</feature>
<feature type="strand" evidence="4">
    <location>
        <begin position="188"/>
        <end position="192"/>
    </location>
</feature>
<feature type="helix" evidence="4">
    <location>
        <begin position="200"/>
        <end position="202"/>
    </location>
</feature>
<feature type="turn" evidence="4">
    <location>
        <begin position="203"/>
        <end position="205"/>
    </location>
</feature>
<feature type="helix" evidence="4">
    <location>
        <begin position="207"/>
        <end position="218"/>
    </location>
</feature>
<feature type="strand" evidence="4">
    <location>
        <begin position="226"/>
        <end position="230"/>
    </location>
</feature>
<feature type="helix" evidence="4">
    <location>
        <begin position="234"/>
        <end position="239"/>
    </location>
</feature>
<feature type="helix" evidence="4">
    <location>
        <begin position="240"/>
        <end position="242"/>
    </location>
</feature>
<feature type="strand" evidence="4">
    <location>
        <begin position="245"/>
        <end position="253"/>
    </location>
</feature>
<feature type="strand" evidence="4">
    <location>
        <begin position="257"/>
        <end position="266"/>
    </location>
</feature>
<feature type="strand" evidence="4">
    <location>
        <begin position="269"/>
        <end position="275"/>
    </location>
</feature>
<feature type="strand" evidence="4">
    <location>
        <begin position="282"/>
        <end position="288"/>
    </location>
</feature>
<feature type="helix" evidence="4">
    <location>
        <begin position="291"/>
        <end position="307"/>
    </location>
</feature>
<feature type="helix" evidence="4">
    <location>
        <begin position="311"/>
        <end position="319"/>
    </location>
</feature>
<feature type="strand" evidence="4">
    <location>
        <begin position="327"/>
        <end position="341"/>
    </location>
</feature>
<feature type="strand" evidence="4">
    <location>
        <begin position="343"/>
        <end position="351"/>
    </location>
</feature>
<feature type="helix" evidence="4">
    <location>
        <begin position="356"/>
        <end position="367"/>
    </location>
</feature>
<feature type="strand" evidence="4">
    <location>
        <begin position="372"/>
        <end position="379"/>
    </location>
</feature>
<feature type="helix" evidence="4">
    <location>
        <begin position="384"/>
        <end position="387"/>
    </location>
</feature>
<feature type="turn" evidence="4">
    <location>
        <begin position="388"/>
        <end position="390"/>
    </location>
</feature>
<feature type="helix" evidence="4">
    <location>
        <begin position="391"/>
        <end position="398"/>
    </location>
</feature>
<feature type="strand" evidence="4">
    <location>
        <begin position="401"/>
        <end position="406"/>
    </location>
</feature>
<feature type="strand" evidence="4">
    <location>
        <begin position="412"/>
        <end position="414"/>
    </location>
</feature>
<feature type="helix" evidence="4">
    <location>
        <begin position="422"/>
        <end position="425"/>
    </location>
</feature>
<feature type="helix" evidence="4">
    <location>
        <begin position="447"/>
        <end position="450"/>
    </location>
</feature>
<feature type="helix" evidence="4">
    <location>
        <begin position="451"/>
        <end position="453"/>
    </location>
</feature>
<feature type="strand" evidence="4">
    <location>
        <begin position="456"/>
        <end position="463"/>
    </location>
</feature>
<feature type="helix" evidence="4">
    <location>
        <begin position="468"/>
        <end position="477"/>
    </location>
</feature>
<feature type="turn" evidence="4">
    <location>
        <begin position="478"/>
        <end position="480"/>
    </location>
</feature>
<sequence>MNTQQLAKLRSIVPEMRRVRHIHFVGIGGAGMGGIAEVLANEGYQISGSDLAPNPVTQQLMNLGATIYFNHRPENVRDASVVVVSSAISADNPEIVAAHEARIPVIRRAEMLAELMRFRHGIAIAGTHGKTTTTAMVSSIYAEAGLDPTFVNGGLVKAAGVHARLGHGRYLIAEADESDASFLHLQPMVAIVTNIEADHMDTYQGDFENLKQTFINFLHNLPFYGRAVMCVDDPVIRELLPRVGRQTTTYGFSEDADVRVEDYQQIGPQGHFTLLRQDKEPMRVTLNAPGRHNALNAAAAVAVATEEGIDDEAILRALESFQGTGRRFDFLGEFPLEPVNGKSGTAMLVDDYGHHPTEVDATIKAARAGWPDKNLVMLFQPHRFTRTRDLYDDFANVLTQVDTLLMLEVYPAGEAPIPGADSRSLCRTIRGRGKIDPILVPDPARVAEMLAPVLTGNDLILVQGAGNIGKIARSLAEIKLKPQTPEEEQHD</sequence>
<protein>
    <recommendedName>
        <fullName>UDP-N-acetylmuramate--L-alanine ligase</fullName>
        <ecNumber>6.3.2.8</ecNumber>
    </recommendedName>
    <alternativeName>
        <fullName>UDP-N-acetylmuramoyl-L-alanine synthetase</fullName>
    </alternativeName>
</protein>
<gene>
    <name type="primary">murC</name>
    <name type="ordered locus">b0091</name>
    <name type="ordered locus">JW0089</name>
</gene>
<keyword id="KW-0002">3D-structure</keyword>
<keyword id="KW-0067">ATP-binding</keyword>
<keyword id="KW-0131">Cell cycle</keyword>
<keyword id="KW-0132">Cell division</keyword>
<keyword id="KW-0133">Cell shape</keyword>
<keyword id="KW-0961">Cell wall biogenesis/degradation</keyword>
<keyword id="KW-0963">Cytoplasm</keyword>
<keyword id="KW-0903">Direct protein sequencing</keyword>
<keyword id="KW-0436">Ligase</keyword>
<keyword id="KW-0547">Nucleotide-binding</keyword>
<keyword id="KW-0573">Peptidoglycan synthesis</keyword>
<keyword id="KW-1185">Reference proteome</keyword>
<comment type="function">
    <text evidence="2">Cell wall formation.</text>
</comment>
<comment type="catalytic activity">
    <reaction evidence="2">
        <text>UDP-N-acetyl-alpha-D-muramate + L-alanine + ATP = UDP-N-acetyl-alpha-D-muramoyl-L-alanine + ADP + phosphate + H(+)</text>
        <dbReference type="Rhea" id="RHEA:23372"/>
        <dbReference type="ChEBI" id="CHEBI:15378"/>
        <dbReference type="ChEBI" id="CHEBI:30616"/>
        <dbReference type="ChEBI" id="CHEBI:43474"/>
        <dbReference type="ChEBI" id="CHEBI:57972"/>
        <dbReference type="ChEBI" id="CHEBI:70757"/>
        <dbReference type="ChEBI" id="CHEBI:83898"/>
        <dbReference type="ChEBI" id="CHEBI:456216"/>
        <dbReference type="EC" id="6.3.2.8"/>
    </reaction>
</comment>
<comment type="biophysicochemical properties">
    <kinetics>
        <KM evidence="2">100 uM for UDP-N-acetyl-alpha-D-muramate</KM>
        <KM evidence="2">20 uM for L-alanine</KM>
        <KM evidence="2">450 uM for ATP</KM>
        <Vmax evidence="2">17.3 umol/min/mg enzyme</Vmax>
    </kinetics>
    <phDependence>
        <text evidence="2">Optimum pH is 8.6.</text>
    </phDependence>
    <temperatureDependence>
        <text evidence="2">Optimum temperature is 45 degrees Celsius.</text>
    </temperatureDependence>
</comment>
<comment type="pathway">
    <text>Cell wall biogenesis; peptidoglycan biosynthesis.</text>
</comment>
<comment type="interaction">
    <interactant intactId="EBI-554607">
        <id>P17952</id>
    </interactant>
    <interactant intactId="EBI-553024">
        <id>P77609</id>
        <label>flxA</label>
    </interactant>
    <organismsDiffer>false</organismsDiffer>
    <experiments>3</experiments>
</comment>
<comment type="interaction">
    <interactant intactId="EBI-554607">
        <id>P17952</id>
    </interactant>
    <interactant intactId="EBI-554774">
        <id>P39328</id>
        <label>ytfT</label>
    </interactant>
    <organismsDiffer>false</organismsDiffer>
    <experiments>3</experiments>
</comment>
<comment type="subcellular location">
    <subcellularLocation>
        <location evidence="3">Cytoplasm</location>
    </subcellularLocation>
</comment>
<comment type="similarity">
    <text evidence="3">Belongs to the MurCDEF family.</text>
</comment>
<organism>
    <name type="scientific">Escherichia coli (strain K12)</name>
    <dbReference type="NCBI Taxonomy" id="83333"/>
    <lineage>
        <taxon>Bacteria</taxon>
        <taxon>Pseudomonadati</taxon>
        <taxon>Pseudomonadota</taxon>
        <taxon>Gammaproteobacteria</taxon>
        <taxon>Enterobacterales</taxon>
        <taxon>Enterobacteriaceae</taxon>
        <taxon>Escherichia</taxon>
    </lineage>
</organism>
<name>MURC_ECOLI</name>
<dbReference type="EC" id="6.3.2.8"/>
<dbReference type="EMBL" id="X52644">
    <property type="protein sequence ID" value="CAA36868.1"/>
    <property type="molecule type" value="Genomic_DNA"/>
</dbReference>
<dbReference type="EMBL" id="X55034">
    <property type="protein sequence ID" value="CAA38868.1"/>
    <property type="molecule type" value="Genomic_DNA"/>
</dbReference>
<dbReference type="EMBL" id="U00096">
    <property type="protein sequence ID" value="AAC73202.1"/>
    <property type="molecule type" value="Genomic_DNA"/>
</dbReference>
<dbReference type="EMBL" id="AP009048">
    <property type="protein sequence ID" value="BAB96659.1"/>
    <property type="molecule type" value="Genomic_DNA"/>
</dbReference>
<dbReference type="EMBL" id="U67892">
    <property type="protein sequence ID" value="AAB60787.1"/>
    <property type="molecule type" value="Genomic_DNA"/>
</dbReference>
<dbReference type="PIR" id="JQ0545">
    <property type="entry name" value="CEECAM"/>
</dbReference>
<dbReference type="RefSeq" id="NP_414633.1">
    <property type="nucleotide sequence ID" value="NC_000913.3"/>
</dbReference>
<dbReference type="RefSeq" id="WP_001096049.1">
    <property type="nucleotide sequence ID" value="NZ_SSZK01000004.1"/>
</dbReference>
<dbReference type="PDB" id="2F00">
    <property type="method" value="X-ray"/>
    <property type="resolution" value="2.50 A"/>
    <property type="chains" value="A/B=1-491"/>
</dbReference>
<dbReference type="PDBsum" id="2F00"/>
<dbReference type="SMR" id="P17952"/>
<dbReference type="BioGRID" id="4261857">
    <property type="interactions" value="474"/>
</dbReference>
<dbReference type="BioGRID" id="850513">
    <property type="interactions" value="5"/>
</dbReference>
<dbReference type="DIP" id="DIP-10278N"/>
<dbReference type="FunCoup" id="P17952">
    <property type="interactions" value="405"/>
</dbReference>
<dbReference type="IntAct" id="P17952">
    <property type="interactions" value="16"/>
</dbReference>
<dbReference type="STRING" id="511145.b0091"/>
<dbReference type="BindingDB" id="P17952"/>
<dbReference type="ChEMBL" id="CHEMBL5168"/>
<dbReference type="jPOST" id="P17952"/>
<dbReference type="PaxDb" id="511145-b0091"/>
<dbReference type="EnsemblBacteria" id="AAC73202">
    <property type="protein sequence ID" value="AAC73202"/>
    <property type="gene ID" value="b0091"/>
</dbReference>
<dbReference type="GeneID" id="75202092"/>
<dbReference type="GeneID" id="946153"/>
<dbReference type="KEGG" id="ecj:JW0089"/>
<dbReference type="KEGG" id="eco:b0091"/>
<dbReference type="KEGG" id="ecoc:C3026_00360"/>
<dbReference type="PATRIC" id="fig|511145.12.peg.95"/>
<dbReference type="EchoBASE" id="EB0614"/>
<dbReference type="eggNOG" id="COG0773">
    <property type="taxonomic scope" value="Bacteria"/>
</dbReference>
<dbReference type="HOGENOM" id="CLU_028104_2_2_6"/>
<dbReference type="InParanoid" id="P17952"/>
<dbReference type="OMA" id="DITYQLR"/>
<dbReference type="OrthoDB" id="9804126at2"/>
<dbReference type="PhylomeDB" id="P17952"/>
<dbReference type="BioCyc" id="EcoCyc:UDP-NACMUR-ALA-LIG-MONOMER"/>
<dbReference type="BioCyc" id="MetaCyc:UDP-NACMUR-ALA-LIG-MONOMER"/>
<dbReference type="BRENDA" id="6.3.2.8">
    <property type="organism ID" value="2026"/>
</dbReference>
<dbReference type="SABIO-RK" id="P17952"/>
<dbReference type="UniPathway" id="UPA00219"/>
<dbReference type="EvolutionaryTrace" id="P17952"/>
<dbReference type="PRO" id="PR:P17952"/>
<dbReference type="Proteomes" id="UP000000625">
    <property type="component" value="Chromosome"/>
</dbReference>
<dbReference type="GO" id="GO:0005737">
    <property type="term" value="C:cytoplasm"/>
    <property type="evidence" value="ECO:0007669"/>
    <property type="project" value="UniProtKB-SubCell"/>
</dbReference>
<dbReference type="GO" id="GO:0005524">
    <property type="term" value="F:ATP binding"/>
    <property type="evidence" value="ECO:0000314"/>
    <property type="project" value="EcoliWiki"/>
</dbReference>
<dbReference type="GO" id="GO:0000287">
    <property type="term" value="F:magnesium ion binding"/>
    <property type="evidence" value="ECO:0000314"/>
    <property type="project" value="EcoliWiki"/>
</dbReference>
<dbReference type="GO" id="GO:0042803">
    <property type="term" value="F:protein homodimerization activity"/>
    <property type="evidence" value="ECO:0000314"/>
    <property type="project" value="EcoCyc"/>
</dbReference>
<dbReference type="GO" id="GO:0008763">
    <property type="term" value="F:UDP-N-acetylmuramate-L-alanine ligase activity"/>
    <property type="evidence" value="ECO:0000314"/>
    <property type="project" value="EcoliWiki"/>
</dbReference>
<dbReference type="GO" id="GO:0051301">
    <property type="term" value="P:cell division"/>
    <property type="evidence" value="ECO:0007669"/>
    <property type="project" value="UniProtKB-KW"/>
</dbReference>
<dbReference type="GO" id="GO:0071555">
    <property type="term" value="P:cell wall organization"/>
    <property type="evidence" value="ECO:0007669"/>
    <property type="project" value="UniProtKB-KW"/>
</dbReference>
<dbReference type="GO" id="GO:0009252">
    <property type="term" value="P:peptidoglycan biosynthetic process"/>
    <property type="evidence" value="ECO:0000315"/>
    <property type="project" value="EcoCyc"/>
</dbReference>
<dbReference type="GO" id="GO:0008360">
    <property type="term" value="P:regulation of cell shape"/>
    <property type="evidence" value="ECO:0007669"/>
    <property type="project" value="UniProtKB-KW"/>
</dbReference>
<dbReference type="FunFam" id="3.40.1190.10:FF:000001">
    <property type="entry name" value="UDP-N-acetylmuramate--L-alanine ligase"/>
    <property type="match status" value="1"/>
</dbReference>
<dbReference type="FunFam" id="3.40.50.720:FF:000046">
    <property type="entry name" value="UDP-N-acetylmuramate--L-alanine ligase"/>
    <property type="match status" value="1"/>
</dbReference>
<dbReference type="FunFam" id="3.90.190.20:FF:000001">
    <property type="entry name" value="UDP-N-acetylmuramate--L-alanine ligase"/>
    <property type="match status" value="1"/>
</dbReference>
<dbReference type="Gene3D" id="3.90.190.20">
    <property type="entry name" value="Mur ligase, C-terminal domain"/>
    <property type="match status" value="1"/>
</dbReference>
<dbReference type="Gene3D" id="3.40.1190.10">
    <property type="entry name" value="Mur-like, catalytic domain"/>
    <property type="match status" value="1"/>
</dbReference>
<dbReference type="Gene3D" id="3.40.50.720">
    <property type="entry name" value="NAD(P)-binding Rossmann-like Domain"/>
    <property type="match status" value="1"/>
</dbReference>
<dbReference type="HAMAP" id="MF_00046">
    <property type="entry name" value="MurC"/>
    <property type="match status" value="1"/>
</dbReference>
<dbReference type="InterPro" id="IPR036565">
    <property type="entry name" value="Mur-like_cat_sf"/>
</dbReference>
<dbReference type="InterPro" id="IPR004101">
    <property type="entry name" value="Mur_ligase_C"/>
</dbReference>
<dbReference type="InterPro" id="IPR036615">
    <property type="entry name" value="Mur_ligase_C_dom_sf"/>
</dbReference>
<dbReference type="InterPro" id="IPR013221">
    <property type="entry name" value="Mur_ligase_cen"/>
</dbReference>
<dbReference type="InterPro" id="IPR000713">
    <property type="entry name" value="Mur_ligase_N"/>
</dbReference>
<dbReference type="InterPro" id="IPR050061">
    <property type="entry name" value="MurCDEF_pg_biosynth"/>
</dbReference>
<dbReference type="InterPro" id="IPR005758">
    <property type="entry name" value="UDP-N-AcMur_Ala_ligase_MurC"/>
</dbReference>
<dbReference type="NCBIfam" id="TIGR01082">
    <property type="entry name" value="murC"/>
    <property type="match status" value="1"/>
</dbReference>
<dbReference type="PANTHER" id="PTHR43445:SF3">
    <property type="entry name" value="UDP-N-ACETYLMURAMATE--L-ALANINE LIGASE"/>
    <property type="match status" value="1"/>
</dbReference>
<dbReference type="PANTHER" id="PTHR43445">
    <property type="entry name" value="UDP-N-ACETYLMURAMATE--L-ALANINE LIGASE-RELATED"/>
    <property type="match status" value="1"/>
</dbReference>
<dbReference type="Pfam" id="PF01225">
    <property type="entry name" value="Mur_ligase"/>
    <property type="match status" value="1"/>
</dbReference>
<dbReference type="Pfam" id="PF02875">
    <property type="entry name" value="Mur_ligase_C"/>
    <property type="match status" value="1"/>
</dbReference>
<dbReference type="Pfam" id="PF08245">
    <property type="entry name" value="Mur_ligase_M"/>
    <property type="match status" value="1"/>
</dbReference>
<dbReference type="SUPFAM" id="SSF51984">
    <property type="entry name" value="MurCD N-terminal domain"/>
    <property type="match status" value="1"/>
</dbReference>
<dbReference type="SUPFAM" id="SSF53623">
    <property type="entry name" value="MurD-like peptide ligases, catalytic domain"/>
    <property type="match status" value="1"/>
</dbReference>
<dbReference type="SUPFAM" id="SSF53244">
    <property type="entry name" value="MurD-like peptide ligases, peptide-binding domain"/>
    <property type="match status" value="1"/>
</dbReference>
<accession>P17952</accession>
<accession>O07099</accession>
<reference key="1">
    <citation type="journal article" date="1990" name="Nucleic Acids Res.">
        <title>Nucleotide sequence involving murG and murC in the mra gene cluster region of Escherichia coli.</title>
        <authorList>
            <person name="Ikeda M."/>
            <person name="Wachi M."/>
            <person name="Jung H.K."/>
            <person name="Ishino F."/>
            <person name="Matsuhashi M."/>
        </authorList>
    </citation>
    <scope>NUCLEOTIDE SEQUENCE [GENOMIC DNA]</scope>
    <source>
        <strain>K12</strain>
    </source>
</reference>
<reference key="2">
    <citation type="journal article" date="1992" name="Nucleic Acids Res.">
        <title>Systematic sequencing of the Escherichia coli genome: analysis of the 0-2.4 min region.</title>
        <authorList>
            <person name="Yura T."/>
            <person name="Mori H."/>
            <person name="Nagai H."/>
            <person name="Nagata T."/>
            <person name="Ishihama A."/>
            <person name="Fujita N."/>
            <person name="Isono K."/>
            <person name="Mizobuchi K."/>
            <person name="Nakata A."/>
        </authorList>
    </citation>
    <scope>NUCLEOTIDE SEQUENCE [LARGE SCALE GENOMIC DNA]</scope>
    <source>
        <strain>K12</strain>
    </source>
</reference>
<reference key="3">
    <citation type="journal article" date="1997" name="Science">
        <title>The complete genome sequence of Escherichia coli K-12.</title>
        <authorList>
            <person name="Blattner F.R."/>
            <person name="Plunkett G. III"/>
            <person name="Bloch C.A."/>
            <person name="Perna N.T."/>
            <person name="Burland V."/>
            <person name="Riley M."/>
            <person name="Collado-Vides J."/>
            <person name="Glasner J.D."/>
            <person name="Rode C.K."/>
            <person name="Mayhew G.F."/>
            <person name="Gregor J."/>
            <person name="Davis N.W."/>
            <person name="Kirkpatrick H.A."/>
            <person name="Goeden M.A."/>
            <person name="Rose D.J."/>
            <person name="Mau B."/>
            <person name="Shao Y."/>
        </authorList>
    </citation>
    <scope>NUCLEOTIDE SEQUENCE [LARGE SCALE GENOMIC DNA]</scope>
    <source>
        <strain>K12 / MG1655 / ATCC 47076</strain>
    </source>
</reference>
<reference key="4">
    <citation type="journal article" date="2006" name="Mol. Syst. Biol.">
        <title>Highly accurate genome sequences of Escherichia coli K-12 strains MG1655 and W3110.</title>
        <authorList>
            <person name="Hayashi K."/>
            <person name="Morooka N."/>
            <person name="Yamamoto Y."/>
            <person name="Fujita K."/>
            <person name="Isono K."/>
            <person name="Choi S."/>
            <person name="Ohtsubo E."/>
            <person name="Baba T."/>
            <person name="Wanner B.L."/>
            <person name="Mori H."/>
            <person name="Horiuchi T."/>
        </authorList>
    </citation>
    <scope>NUCLEOTIDE SEQUENCE [LARGE SCALE GENOMIC DNA]</scope>
    <source>
        <strain>K12 / W3110 / ATCC 27325 / DSM 5911</strain>
    </source>
</reference>
<reference key="5">
    <citation type="journal article" date="1997" name="Biochemistry">
        <title>Conditionally lethal Escherichia coli murein mutants contain point defects that map to regions conserved among murein and folyl poly-gamma-glutamate ligases: identification of a ligase superfamily.</title>
        <authorList>
            <person name="Eveland S.S."/>
            <person name="Pompliano D.L."/>
            <person name="Anderson M.S."/>
        </authorList>
    </citation>
    <scope>NUCLEOTIDE SEQUENCE [GENOMIC DNA] (MUTANT MURC3)</scope>
    <source>
        <strain>CGSC 5988</strain>
    </source>
</reference>
<reference key="6">
    <citation type="journal article" date="1995" name="Eur. J. Biochem.">
        <title>Over-production, purification and properties of the uridine-diphosphate-N-acetylmuramate:L-alanine ligase from Escherichia coli.</title>
        <authorList>
            <person name="Liger D."/>
            <person name="Masson A."/>
            <person name="Blanot D."/>
            <person name="van Heijenoort J."/>
            <person name="Parquet C."/>
        </authorList>
    </citation>
    <scope>PROTEIN SEQUENCE OF 1-14</scope>
    <scope>FUNCTION</scope>
    <scope>CATALYTIC ACTIVITY</scope>
    <scope>BIOPHYSICOCHEMICAL PROPERTIES</scope>
    <scope>SUBSTRATE SPECIFICITY</scope>
</reference>